<organism>
    <name type="scientific">Lachnoclostridium phytofermentans (strain ATCC 700394 / DSM 18823 / ISDg)</name>
    <name type="common">Clostridium phytofermentans</name>
    <dbReference type="NCBI Taxonomy" id="357809"/>
    <lineage>
        <taxon>Bacteria</taxon>
        <taxon>Bacillati</taxon>
        <taxon>Bacillota</taxon>
        <taxon>Clostridia</taxon>
        <taxon>Lachnospirales</taxon>
        <taxon>Lachnospiraceae</taxon>
    </lineage>
</organism>
<dbReference type="EC" id="5.3.1.12" evidence="1"/>
<dbReference type="EMBL" id="CP000885">
    <property type="protein sequence ID" value="ABX43104.1"/>
    <property type="molecule type" value="Genomic_DNA"/>
</dbReference>
<dbReference type="RefSeq" id="WP_012200755.1">
    <property type="nucleotide sequence ID" value="NC_010001.1"/>
</dbReference>
<dbReference type="SMR" id="A9KNI7"/>
<dbReference type="STRING" id="357809.Cphy_2743"/>
<dbReference type="KEGG" id="cpy:Cphy_2743"/>
<dbReference type="eggNOG" id="COG1904">
    <property type="taxonomic scope" value="Bacteria"/>
</dbReference>
<dbReference type="HOGENOM" id="CLU_044465_1_0_9"/>
<dbReference type="OrthoDB" id="9766564at2"/>
<dbReference type="UniPathway" id="UPA00246"/>
<dbReference type="Proteomes" id="UP000000370">
    <property type="component" value="Chromosome"/>
</dbReference>
<dbReference type="GO" id="GO:0008880">
    <property type="term" value="F:glucuronate isomerase activity"/>
    <property type="evidence" value="ECO:0007669"/>
    <property type="project" value="UniProtKB-UniRule"/>
</dbReference>
<dbReference type="GO" id="GO:0019698">
    <property type="term" value="P:D-galacturonate catabolic process"/>
    <property type="evidence" value="ECO:0007669"/>
    <property type="project" value="TreeGrafter"/>
</dbReference>
<dbReference type="GO" id="GO:0042840">
    <property type="term" value="P:D-glucuronate catabolic process"/>
    <property type="evidence" value="ECO:0007669"/>
    <property type="project" value="TreeGrafter"/>
</dbReference>
<dbReference type="Gene3D" id="3.20.20.140">
    <property type="entry name" value="Metal-dependent hydrolases"/>
    <property type="match status" value="1"/>
</dbReference>
<dbReference type="Gene3D" id="1.10.2020.10">
    <property type="entry name" value="uronate isomerase, domain 2, chain A"/>
    <property type="match status" value="1"/>
</dbReference>
<dbReference type="HAMAP" id="MF_00675">
    <property type="entry name" value="UxaC"/>
    <property type="match status" value="1"/>
</dbReference>
<dbReference type="InterPro" id="IPR032466">
    <property type="entry name" value="Metal_Hydrolase"/>
</dbReference>
<dbReference type="InterPro" id="IPR003766">
    <property type="entry name" value="Uronate_isomerase"/>
</dbReference>
<dbReference type="NCBIfam" id="NF002794">
    <property type="entry name" value="PRK02925.1"/>
    <property type="match status" value="1"/>
</dbReference>
<dbReference type="PANTHER" id="PTHR30068">
    <property type="entry name" value="URONATE ISOMERASE"/>
    <property type="match status" value="1"/>
</dbReference>
<dbReference type="PANTHER" id="PTHR30068:SF4">
    <property type="entry name" value="URONATE ISOMERASE"/>
    <property type="match status" value="1"/>
</dbReference>
<dbReference type="Pfam" id="PF02614">
    <property type="entry name" value="UxaC"/>
    <property type="match status" value="1"/>
</dbReference>
<dbReference type="SUPFAM" id="SSF51556">
    <property type="entry name" value="Metallo-dependent hydrolases"/>
    <property type="match status" value="1"/>
</dbReference>
<comment type="catalytic activity">
    <reaction evidence="1">
        <text>D-glucuronate = D-fructuronate</text>
        <dbReference type="Rhea" id="RHEA:13049"/>
        <dbReference type="ChEBI" id="CHEBI:58720"/>
        <dbReference type="ChEBI" id="CHEBI:59863"/>
        <dbReference type="EC" id="5.3.1.12"/>
    </reaction>
</comment>
<comment type="catalytic activity">
    <reaction evidence="1">
        <text>aldehydo-D-galacturonate = keto-D-tagaturonate</text>
        <dbReference type="Rhea" id="RHEA:27702"/>
        <dbReference type="ChEBI" id="CHEBI:12952"/>
        <dbReference type="ChEBI" id="CHEBI:17886"/>
        <dbReference type="EC" id="5.3.1.12"/>
    </reaction>
</comment>
<comment type="pathway">
    <text evidence="1">Carbohydrate metabolism; pentose and glucuronate interconversion.</text>
</comment>
<comment type="similarity">
    <text evidence="1">Belongs to the metallo-dependent hydrolases superfamily. Uronate isomerase family.</text>
</comment>
<sequence>MKPFMDKDFLLSTETAKTLYHDYAAQVPIIDYHCHINPEEIAKDRSFDTITQVWLGGDHYKWRQMRSNGIDEKYITGDASDIEKFEKWAETLQKAIGNPLYHWSHLELQRYFDYYGTLSAKTSEEVFKLCNEKLSQPEMSVRGLIKESNVDTICTTDDPIDSLEWHKAIAKDSTFDVKVLPAWRPDKAMNLEKPDYLDYLAKLESVSGVKIASFAGLMEALKVRLEFFNSMGCKVSDHALSYVMYKPATEEEIEAIFAKRLAGGTISEMEELQFKTAFMVSVGREYNRLGWVMQLHYGTKRDNNVFRFNQLGADTGFDCINTEGSSAELANFLNALNSSDELPKTIIYSLNPTDNAAIGTVLGCFQDSTAVGKIQQGSAWWFNDNKTGMIDQMTSLANLGLLANFVGMLTDSRSFLSYTRHEYFRRILCELIGNWVENGEYPNDIEFLGQMVQDISYYNTKRYFGF</sequence>
<proteinExistence type="inferred from homology"/>
<feature type="chain" id="PRO_1000082960" description="Uronate isomerase">
    <location>
        <begin position="1"/>
        <end position="466"/>
    </location>
</feature>
<gene>
    <name evidence="1" type="primary">uxaC</name>
    <name type="ordered locus">Cphy_2743</name>
</gene>
<evidence type="ECO:0000255" key="1">
    <source>
        <dbReference type="HAMAP-Rule" id="MF_00675"/>
    </source>
</evidence>
<name>UXAC_LACP7</name>
<accession>A9KNI7</accession>
<protein>
    <recommendedName>
        <fullName evidence="1">Uronate isomerase</fullName>
        <ecNumber evidence="1">5.3.1.12</ecNumber>
    </recommendedName>
    <alternativeName>
        <fullName evidence="1">Glucuronate isomerase</fullName>
    </alternativeName>
    <alternativeName>
        <fullName evidence="1">Uronic isomerase</fullName>
    </alternativeName>
</protein>
<keyword id="KW-0413">Isomerase</keyword>
<keyword id="KW-1185">Reference proteome</keyword>
<reference key="1">
    <citation type="submission" date="2007-11" db="EMBL/GenBank/DDBJ databases">
        <title>Complete genome sequence of Clostridium phytofermentans ISDg.</title>
        <authorList>
            <person name="Leschine S.B."/>
            <person name="Warnick T.A."/>
            <person name="Blanchard J.L."/>
            <person name="Schnell D.J."/>
            <person name="Petit E.L."/>
            <person name="LaTouf W.G."/>
            <person name="Copeland A."/>
            <person name="Lucas S."/>
            <person name="Lapidus A."/>
            <person name="Barry K."/>
            <person name="Glavina del Rio T."/>
            <person name="Dalin E."/>
            <person name="Tice H."/>
            <person name="Pitluck S."/>
            <person name="Kiss H."/>
            <person name="Brettin T."/>
            <person name="Bruce D."/>
            <person name="Detter J.C."/>
            <person name="Han C."/>
            <person name="Kuske C."/>
            <person name="Schmutz J."/>
            <person name="Larimer F."/>
            <person name="Land M."/>
            <person name="Hauser L."/>
            <person name="Kyrpides N."/>
            <person name="Kim E.A."/>
            <person name="Richardson P."/>
        </authorList>
    </citation>
    <scope>NUCLEOTIDE SEQUENCE [LARGE SCALE GENOMIC DNA]</scope>
    <source>
        <strain>ATCC 700394 / DSM 18823 / ISDg</strain>
    </source>
</reference>